<proteinExistence type="inferred from homology"/>
<reference key="1">
    <citation type="journal article" date="2009" name="Vaccine">
        <title>Whole genome sequence analysis of Mycobacterium bovis bacillus Calmette-Guerin (BCG) Tokyo 172: a comparative study of BCG vaccine substrains.</title>
        <authorList>
            <person name="Seki M."/>
            <person name="Honda I."/>
            <person name="Fujita I."/>
            <person name="Yano I."/>
            <person name="Yamamoto S."/>
            <person name="Koyama A."/>
        </authorList>
    </citation>
    <scope>NUCLEOTIDE SEQUENCE [LARGE SCALE GENOMIC DNA]</scope>
    <source>
        <strain>BCG / Tokyo 172 / ATCC 35737 / TMC 1019</strain>
    </source>
</reference>
<feature type="chain" id="PRO_1000146402" description="Small ribosomal subunit protein uS19">
    <location>
        <begin position="1"/>
        <end position="93"/>
    </location>
</feature>
<protein>
    <recommendedName>
        <fullName evidence="1">Small ribosomal subunit protein uS19</fullName>
    </recommendedName>
    <alternativeName>
        <fullName evidence="2">30S ribosomal protein S19</fullName>
    </alternativeName>
</protein>
<accession>C1AL39</accession>
<evidence type="ECO:0000255" key="1">
    <source>
        <dbReference type="HAMAP-Rule" id="MF_00531"/>
    </source>
</evidence>
<evidence type="ECO:0000305" key="2"/>
<gene>
    <name evidence="1" type="primary">rpsS</name>
    <name type="ordered locus">JTY_0725</name>
</gene>
<sequence length="93" mass="10804">MPRSLKKGPFVDEHLLKKVDVQNEKNTKQVIKTWSRRSTIIPDFIGHTFAVHDGRKHVPVFVTESMVGHKLGEFAPTRTFKGHIKDDRKSKRR</sequence>
<comment type="function">
    <text evidence="1">Protein S19 forms a complex with S13 that binds strongly to the 16S ribosomal RNA.</text>
</comment>
<comment type="similarity">
    <text evidence="1">Belongs to the universal ribosomal protein uS19 family.</text>
</comment>
<name>RS19_MYCBT</name>
<organism>
    <name type="scientific">Mycobacterium bovis (strain BCG / Tokyo 172 / ATCC 35737 / TMC 1019)</name>
    <dbReference type="NCBI Taxonomy" id="561275"/>
    <lineage>
        <taxon>Bacteria</taxon>
        <taxon>Bacillati</taxon>
        <taxon>Actinomycetota</taxon>
        <taxon>Actinomycetes</taxon>
        <taxon>Mycobacteriales</taxon>
        <taxon>Mycobacteriaceae</taxon>
        <taxon>Mycobacterium</taxon>
        <taxon>Mycobacterium tuberculosis complex</taxon>
    </lineage>
</organism>
<keyword id="KW-0687">Ribonucleoprotein</keyword>
<keyword id="KW-0689">Ribosomal protein</keyword>
<keyword id="KW-0694">RNA-binding</keyword>
<keyword id="KW-0699">rRNA-binding</keyword>
<dbReference type="EMBL" id="AP010918">
    <property type="protein sequence ID" value="BAH25018.1"/>
    <property type="molecule type" value="Genomic_DNA"/>
</dbReference>
<dbReference type="RefSeq" id="WP_003403584.1">
    <property type="nucleotide sequence ID" value="NZ_CP014566.1"/>
</dbReference>
<dbReference type="SMR" id="C1AL39"/>
<dbReference type="GeneID" id="45424670"/>
<dbReference type="KEGG" id="mbt:JTY_0725"/>
<dbReference type="HOGENOM" id="CLU_144911_0_1_11"/>
<dbReference type="GO" id="GO:0005737">
    <property type="term" value="C:cytoplasm"/>
    <property type="evidence" value="ECO:0007669"/>
    <property type="project" value="UniProtKB-ARBA"/>
</dbReference>
<dbReference type="GO" id="GO:0015935">
    <property type="term" value="C:small ribosomal subunit"/>
    <property type="evidence" value="ECO:0007669"/>
    <property type="project" value="InterPro"/>
</dbReference>
<dbReference type="GO" id="GO:0019843">
    <property type="term" value="F:rRNA binding"/>
    <property type="evidence" value="ECO:0007669"/>
    <property type="project" value="UniProtKB-UniRule"/>
</dbReference>
<dbReference type="GO" id="GO:0003735">
    <property type="term" value="F:structural constituent of ribosome"/>
    <property type="evidence" value="ECO:0007669"/>
    <property type="project" value="InterPro"/>
</dbReference>
<dbReference type="GO" id="GO:0000028">
    <property type="term" value="P:ribosomal small subunit assembly"/>
    <property type="evidence" value="ECO:0007669"/>
    <property type="project" value="TreeGrafter"/>
</dbReference>
<dbReference type="GO" id="GO:0006412">
    <property type="term" value="P:translation"/>
    <property type="evidence" value="ECO:0007669"/>
    <property type="project" value="UniProtKB-UniRule"/>
</dbReference>
<dbReference type="FunFam" id="3.30.860.10:FF:000001">
    <property type="entry name" value="30S ribosomal protein S19"/>
    <property type="match status" value="1"/>
</dbReference>
<dbReference type="Gene3D" id="3.30.860.10">
    <property type="entry name" value="30s Ribosomal Protein S19, Chain A"/>
    <property type="match status" value="1"/>
</dbReference>
<dbReference type="HAMAP" id="MF_00531">
    <property type="entry name" value="Ribosomal_uS19"/>
    <property type="match status" value="1"/>
</dbReference>
<dbReference type="InterPro" id="IPR002222">
    <property type="entry name" value="Ribosomal_uS19"/>
</dbReference>
<dbReference type="InterPro" id="IPR005732">
    <property type="entry name" value="Ribosomal_uS19_bac-type"/>
</dbReference>
<dbReference type="InterPro" id="IPR020934">
    <property type="entry name" value="Ribosomal_uS19_CS"/>
</dbReference>
<dbReference type="InterPro" id="IPR023575">
    <property type="entry name" value="Ribosomal_uS19_SF"/>
</dbReference>
<dbReference type="NCBIfam" id="TIGR01050">
    <property type="entry name" value="rpsS_bact"/>
    <property type="match status" value="1"/>
</dbReference>
<dbReference type="PANTHER" id="PTHR11880">
    <property type="entry name" value="RIBOSOMAL PROTEIN S19P FAMILY MEMBER"/>
    <property type="match status" value="1"/>
</dbReference>
<dbReference type="PANTHER" id="PTHR11880:SF8">
    <property type="entry name" value="SMALL RIBOSOMAL SUBUNIT PROTEIN US19M"/>
    <property type="match status" value="1"/>
</dbReference>
<dbReference type="Pfam" id="PF00203">
    <property type="entry name" value="Ribosomal_S19"/>
    <property type="match status" value="1"/>
</dbReference>
<dbReference type="PIRSF" id="PIRSF002144">
    <property type="entry name" value="Ribosomal_S19"/>
    <property type="match status" value="1"/>
</dbReference>
<dbReference type="PRINTS" id="PR00975">
    <property type="entry name" value="RIBOSOMALS19"/>
</dbReference>
<dbReference type="SUPFAM" id="SSF54570">
    <property type="entry name" value="Ribosomal protein S19"/>
    <property type="match status" value="1"/>
</dbReference>
<dbReference type="PROSITE" id="PS00323">
    <property type="entry name" value="RIBOSOMAL_S19"/>
    <property type="match status" value="1"/>
</dbReference>